<organism>
    <name type="scientific">Yersinia pestis bv. Antiqua (strain Antiqua)</name>
    <dbReference type="NCBI Taxonomy" id="360102"/>
    <lineage>
        <taxon>Bacteria</taxon>
        <taxon>Pseudomonadati</taxon>
        <taxon>Pseudomonadota</taxon>
        <taxon>Gammaproteobacteria</taxon>
        <taxon>Enterobacterales</taxon>
        <taxon>Yersiniaceae</taxon>
        <taxon>Yersinia</taxon>
    </lineage>
</organism>
<comment type="subcellular location">
    <subcellularLocation>
        <location evidence="1">Cell inner membrane</location>
        <topology evidence="1">Multi-pass membrane protein</topology>
    </subcellularLocation>
</comment>
<comment type="similarity">
    <text evidence="1">Belongs to the UPF0259 family.</text>
</comment>
<reference key="1">
    <citation type="journal article" date="2006" name="J. Bacteriol.">
        <title>Complete genome sequence of Yersinia pestis strains Antiqua and Nepal516: evidence of gene reduction in an emerging pathogen.</title>
        <authorList>
            <person name="Chain P.S.G."/>
            <person name="Hu P."/>
            <person name="Malfatti S.A."/>
            <person name="Radnedge L."/>
            <person name="Larimer F."/>
            <person name="Vergez L.M."/>
            <person name="Worsham P."/>
            <person name="Chu M.C."/>
            <person name="Andersen G.L."/>
        </authorList>
    </citation>
    <scope>NUCLEOTIDE SEQUENCE [LARGE SCALE GENOMIC DNA]</scope>
    <source>
        <strain>Antiqua</strain>
    </source>
</reference>
<sequence>MPITANTLYRDSFNFLRNQIAAILLLALLTAFITVMLNQTFMPASEQLSILSIPENDITSSGNLSISEIVSQMTPEQQMVLLRVSAVATFSALVGNVLLVGGLLTLIAMVSQGRRVSALQAIGLSLPILPRLLVLMFISTLVIQLGLTFFIVPGVAIAIALSLSPIIVTNERMGIFAAMKASAQLAFANVRLIVPAMMLWIAVKLLLLFLISRFTVLPPTIATIVLSTLSNLASALLLVYLFRLYMLLRPVSLDKQ</sequence>
<feature type="chain" id="PRO_1000064539" description="UPF0259 membrane protein YPA_1558">
    <location>
        <begin position="1"/>
        <end position="256"/>
    </location>
</feature>
<feature type="transmembrane region" description="Helical" evidence="1">
    <location>
        <begin position="20"/>
        <end position="40"/>
    </location>
</feature>
<feature type="transmembrane region" description="Helical" evidence="1">
    <location>
        <begin position="90"/>
        <end position="110"/>
    </location>
</feature>
<feature type="transmembrane region" description="Helical" evidence="1">
    <location>
        <begin position="118"/>
        <end position="138"/>
    </location>
</feature>
<feature type="transmembrane region" description="Helical" evidence="1">
    <location>
        <begin position="141"/>
        <end position="161"/>
    </location>
</feature>
<feature type="transmembrane region" description="Helical" evidence="1">
    <location>
        <begin position="192"/>
        <end position="212"/>
    </location>
</feature>
<feature type="transmembrane region" description="Helical" evidence="1">
    <location>
        <begin position="221"/>
        <end position="241"/>
    </location>
</feature>
<name>Y1558_YERPA</name>
<dbReference type="EMBL" id="CP000308">
    <property type="protein sequence ID" value="ABG13524.1"/>
    <property type="molecule type" value="Genomic_DNA"/>
</dbReference>
<dbReference type="RefSeq" id="WP_002210639.1">
    <property type="nucleotide sequence ID" value="NZ_CP009906.1"/>
</dbReference>
<dbReference type="KEGG" id="ypa:YPA_1558"/>
<dbReference type="Proteomes" id="UP000001971">
    <property type="component" value="Chromosome"/>
</dbReference>
<dbReference type="GO" id="GO:0005886">
    <property type="term" value="C:plasma membrane"/>
    <property type="evidence" value="ECO:0007669"/>
    <property type="project" value="UniProtKB-SubCell"/>
</dbReference>
<dbReference type="HAMAP" id="MF_01067">
    <property type="entry name" value="UPF0259"/>
    <property type="match status" value="1"/>
</dbReference>
<dbReference type="InterPro" id="IPR009627">
    <property type="entry name" value="UPF0259"/>
</dbReference>
<dbReference type="NCBIfam" id="NF002774">
    <property type="entry name" value="PRK02868.1"/>
    <property type="match status" value="1"/>
</dbReference>
<dbReference type="Pfam" id="PF06790">
    <property type="entry name" value="UPF0259"/>
    <property type="match status" value="1"/>
</dbReference>
<protein>
    <recommendedName>
        <fullName evidence="1">UPF0259 membrane protein YPA_1558</fullName>
    </recommendedName>
</protein>
<evidence type="ECO:0000255" key="1">
    <source>
        <dbReference type="HAMAP-Rule" id="MF_01067"/>
    </source>
</evidence>
<accession>Q1C7P8</accession>
<keyword id="KW-0997">Cell inner membrane</keyword>
<keyword id="KW-1003">Cell membrane</keyword>
<keyword id="KW-0472">Membrane</keyword>
<keyword id="KW-0812">Transmembrane</keyword>
<keyword id="KW-1133">Transmembrane helix</keyword>
<proteinExistence type="inferred from homology"/>
<gene>
    <name type="ordered locus">YPA_1558</name>
</gene>